<name>SMG_SHELP</name>
<sequence length="157" mass="18534">MFDILMYLFENYVHSEVELLVDEDELTQELTRAGFHQSAIIKALSWLEHLASLQESDQPYLCNHDQHSFRIYTQAEMEKLDVECRGFLLFLEQIKVLNVELREMVIDRVMELDEPALILEDLKWVILMVLFNVPGNESAYEQMEDLIFEQPDGRLHS</sequence>
<accession>A3QJF1</accession>
<gene>
    <name evidence="1" type="primary">smg</name>
    <name type="ordered locus">Shew_3733</name>
</gene>
<feature type="chain" id="PRO_1000025667" description="Protein Smg homolog">
    <location>
        <begin position="1"/>
        <end position="157"/>
    </location>
</feature>
<protein>
    <recommendedName>
        <fullName evidence="1">Protein Smg homolog</fullName>
    </recommendedName>
</protein>
<keyword id="KW-1185">Reference proteome</keyword>
<reference key="1">
    <citation type="submission" date="2007-03" db="EMBL/GenBank/DDBJ databases">
        <title>Complete sequence of Shewanella loihica PV-4.</title>
        <authorList>
            <consortium name="US DOE Joint Genome Institute"/>
            <person name="Copeland A."/>
            <person name="Lucas S."/>
            <person name="Lapidus A."/>
            <person name="Barry K."/>
            <person name="Detter J.C."/>
            <person name="Glavina del Rio T."/>
            <person name="Hammon N."/>
            <person name="Israni S."/>
            <person name="Dalin E."/>
            <person name="Tice H."/>
            <person name="Pitluck S."/>
            <person name="Chain P."/>
            <person name="Malfatti S."/>
            <person name="Shin M."/>
            <person name="Vergez L."/>
            <person name="Schmutz J."/>
            <person name="Larimer F."/>
            <person name="Land M."/>
            <person name="Hauser L."/>
            <person name="Kyrpides N."/>
            <person name="Mikhailova N."/>
            <person name="Romine M.F."/>
            <person name="Serres G."/>
            <person name="Fredrickson J."/>
            <person name="Tiedje J."/>
            <person name="Richardson P."/>
        </authorList>
    </citation>
    <scope>NUCLEOTIDE SEQUENCE [LARGE SCALE GENOMIC DNA]</scope>
    <source>
        <strain>ATCC BAA-1088 / PV-4</strain>
    </source>
</reference>
<evidence type="ECO:0000255" key="1">
    <source>
        <dbReference type="HAMAP-Rule" id="MF_00598"/>
    </source>
</evidence>
<comment type="similarity">
    <text evidence="1">Belongs to the Smg family.</text>
</comment>
<organism>
    <name type="scientific">Shewanella loihica (strain ATCC BAA-1088 / PV-4)</name>
    <dbReference type="NCBI Taxonomy" id="323850"/>
    <lineage>
        <taxon>Bacteria</taxon>
        <taxon>Pseudomonadati</taxon>
        <taxon>Pseudomonadota</taxon>
        <taxon>Gammaproteobacteria</taxon>
        <taxon>Alteromonadales</taxon>
        <taxon>Shewanellaceae</taxon>
        <taxon>Shewanella</taxon>
    </lineage>
</organism>
<dbReference type="EMBL" id="CP000606">
    <property type="protein sequence ID" value="ABO25599.1"/>
    <property type="molecule type" value="Genomic_DNA"/>
</dbReference>
<dbReference type="RefSeq" id="WP_011867527.1">
    <property type="nucleotide sequence ID" value="NC_009092.1"/>
</dbReference>
<dbReference type="SMR" id="A3QJF1"/>
<dbReference type="STRING" id="323850.Shew_3733"/>
<dbReference type="KEGG" id="slo:Shew_3733"/>
<dbReference type="eggNOG" id="COG2922">
    <property type="taxonomic scope" value="Bacteria"/>
</dbReference>
<dbReference type="HOGENOM" id="CLU_133242_0_0_6"/>
<dbReference type="OrthoDB" id="9788984at2"/>
<dbReference type="Proteomes" id="UP000001558">
    <property type="component" value="Chromosome"/>
</dbReference>
<dbReference type="HAMAP" id="MF_00598">
    <property type="entry name" value="Smg"/>
    <property type="match status" value="1"/>
</dbReference>
<dbReference type="InterPro" id="IPR007456">
    <property type="entry name" value="Smg"/>
</dbReference>
<dbReference type="NCBIfam" id="NF002897">
    <property type="entry name" value="PRK03430.1"/>
    <property type="match status" value="1"/>
</dbReference>
<dbReference type="PANTHER" id="PTHR38692">
    <property type="entry name" value="PROTEIN SMG"/>
    <property type="match status" value="1"/>
</dbReference>
<dbReference type="PANTHER" id="PTHR38692:SF1">
    <property type="entry name" value="PROTEIN SMG"/>
    <property type="match status" value="1"/>
</dbReference>
<dbReference type="Pfam" id="PF04361">
    <property type="entry name" value="DUF494"/>
    <property type="match status" value="1"/>
</dbReference>
<proteinExistence type="inferred from homology"/>